<reference key="1">
    <citation type="submission" date="2000-04" db="EMBL/GenBank/DDBJ databases">
        <title>Behavioral, pharmacologic and molecular characterization of a Zebra finch CB1 cannabinoid receptor.</title>
        <authorList>
            <person name="Soderstrom K."/>
            <person name="Johnson F."/>
        </authorList>
    </citation>
    <scope>NUCLEOTIDE SEQUENCE [MRNA]</scope>
</reference>
<comment type="function">
    <text evidence="2 3">G-protein coupled receptor for cannabinoids (By similarity). Mediates many cannabinoid-induced effects in the central nervous system (CNS), as well as in peripheral tissues (By similarity). Regulates cellular respiration and energy production in response to cannabinoids (By similarity). Signaling typically involves reduction in cyclic AMP (By similarity).</text>
</comment>
<comment type="subcellular location">
    <subcellularLocation>
        <location evidence="3">Cell membrane</location>
        <topology evidence="2">Multi-pass membrane protein</topology>
    </subcellularLocation>
    <subcellularLocation>
        <location evidence="3">Mitochondrion outer membrane</location>
    </subcellularLocation>
    <subcellularLocation>
        <location evidence="1">Cell projection</location>
        <location evidence="1">Axon</location>
    </subcellularLocation>
    <subcellularLocation>
        <location evidence="1">Presynapse</location>
    </subcellularLocation>
    <text evidence="1 3">Unexpectedly, in the mitochondria, the C-terminus is located in the mitochondrial intermembrane space, a compartment topologically considered as extracellular. In canonical seven-transmembrane G-protein coupled receptors, the C-terminus is cytosolic (By similarity). Found on presynaptic axon terminals in some GABAergic neurons in the somatosensory cortex (By similarity).</text>
</comment>
<comment type="PTM">
    <text evidence="2">Palmitoylation at Cys-417 is important for recruitment at both plasma membrane and lipid rafts and association with G protein alpha subunits.</text>
</comment>
<comment type="similarity">
    <text evidence="5">Belongs to the G-protein coupled receptor 1 family.</text>
</comment>
<protein>
    <recommendedName>
        <fullName>Cannabinoid receptor 1</fullName>
        <shortName>CB-R</shortName>
        <shortName>CB1</shortName>
    </recommendedName>
</protein>
<feature type="chain" id="PRO_0000069319" description="Cannabinoid receptor 1">
    <location>
        <begin position="1"/>
        <end position="473"/>
    </location>
</feature>
<feature type="topological domain" description="Extracellular" evidence="2">
    <location>
        <begin position="1"/>
        <end position="118"/>
    </location>
</feature>
<feature type="transmembrane region" description="Helical; Name=1" evidence="2">
    <location>
        <begin position="119"/>
        <end position="144"/>
    </location>
</feature>
<feature type="topological domain" description="Cytoplasmic" evidence="2">
    <location>
        <begin position="145"/>
        <end position="156"/>
    </location>
</feature>
<feature type="transmembrane region" description="Helical; Name=2" evidence="2">
    <location>
        <begin position="157"/>
        <end position="177"/>
    </location>
</feature>
<feature type="topological domain" description="Extracellular" evidence="2">
    <location>
        <begin position="178"/>
        <end position="189"/>
    </location>
</feature>
<feature type="transmembrane region" description="Helical; Name=3" evidence="2">
    <location>
        <begin position="190"/>
        <end position="214"/>
    </location>
</feature>
<feature type="topological domain" description="Cytoplasmic" evidence="2">
    <location>
        <begin position="215"/>
        <end position="234"/>
    </location>
</feature>
<feature type="transmembrane region" description="Helical; Name=4" evidence="2">
    <location>
        <begin position="235"/>
        <end position="257"/>
    </location>
</feature>
<feature type="topological domain" description="Extracellular" evidence="2">
    <location>
        <begin position="258"/>
        <end position="275"/>
    </location>
</feature>
<feature type="transmembrane region" description="Helical; Name=5" evidence="2">
    <location>
        <begin position="276"/>
        <end position="301"/>
    </location>
</feature>
<feature type="topological domain" description="Cytoplasmic" evidence="2">
    <location>
        <begin position="302"/>
        <end position="346"/>
    </location>
</feature>
<feature type="transmembrane region" description="Helical; Name=6" evidence="2">
    <location>
        <begin position="347"/>
        <end position="367"/>
    </location>
</feature>
<feature type="topological domain" description="Extracellular" evidence="2">
    <location>
        <begin position="368"/>
        <end position="379"/>
    </location>
</feature>
<feature type="transmembrane region" description="Helical; Name=7" evidence="2">
    <location>
        <begin position="380"/>
        <end position="401"/>
    </location>
</feature>
<feature type="topological domain" description="Cytoplasmic" evidence="2">
    <location>
        <begin position="402"/>
        <end position="473"/>
    </location>
</feature>
<feature type="region of interest" description="Required for mitochondrial localization" evidence="3">
    <location>
        <begin position="2"/>
        <end position="23"/>
    </location>
</feature>
<feature type="lipid moiety-binding region" description="S-palmitoyl cysteine" evidence="2">
    <location>
        <position position="417"/>
    </location>
</feature>
<feature type="glycosylation site" description="N-linked (GlcNAc...) asparagine" evidence="4">
    <location>
        <position position="79"/>
    </location>
</feature>
<feature type="glycosylation site" description="N-linked (GlcNAc...) asparagine" evidence="4">
    <location>
        <position position="85"/>
    </location>
</feature>
<sequence>MKSILDGLADTTFRTITTDLLYVGSNDIQYEDMKGDMASKLGYYPQKFPLSSFRGDPFQEKMTGGDDSLLSIIPSEQVNITEFYNKSLSTFKDNEENIQCGENFMDMECFMILNPSQQLAIAVLSLTLGTFTVLENLLVLCVILHSRSLRCRPSYHFIGSLAVADLLGSVIFVYSFVDFHVFHRKDSPNVFLFKLGGVTASFTASVGSLFLTAIDRYISIHRPLAYKRIVTRPKAVVAFCVMWTIAIVIAVLPLLGWNCKKLNSVCSDIFPLIDETYLMFWIGVTSILLLFIVYAYMYILWKAHSHAVRMLQRGTQKSIIIQSTEDGKVQITRPDQTRMDIRLAKTLVLILVVLIICWGPLLAIMVYDVFGKMNKLIKTIFAFCSMLCLLNSTVNPIIYALRSKDLRHAFRSMFPTCEGTAQPLDNSMESDCQHKHANNAGNVHRAAESCIKSTVKIAKVTMSVSTDTTAEAL</sequence>
<name>CNR1_TAEGU</name>
<gene>
    <name type="primary">CNR1</name>
</gene>
<keyword id="KW-1003">Cell membrane</keyword>
<keyword id="KW-0966">Cell projection</keyword>
<keyword id="KW-0297">G-protein coupled receptor</keyword>
<keyword id="KW-0325">Glycoprotein</keyword>
<keyword id="KW-0449">Lipoprotein</keyword>
<keyword id="KW-0472">Membrane</keyword>
<keyword id="KW-0496">Mitochondrion</keyword>
<keyword id="KW-1000">Mitochondrion outer membrane</keyword>
<keyword id="KW-0564">Palmitate</keyword>
<keyword id="KW-0675">Receptor</keyword>
<keyword id="KW-1185">Reference proteome</keyword>
<keyword id="KW-0770">Synapse</keyword>
<keyword id="KW-0807">Transducer</keyword>
<keyword id="KW-0812">Transmembrane</keyword>
<keyword id="KW-1133">Transmembrane helix</keyword>
<dbReference type="EMBL" id="AF255388">
    <property type="protein sequence ID" value="AAF78049.1"/>
    <property type="molecule type" value="mRNA"/>
</dbReference>
<dbReference type="RefSeq" id="NP_001041727.1">
    <property type="nucleotide sequence ID" value="NM_001048262.1"/>
</dbReference>
<dbReference type="SMR" id="P56971"/>
<dbReference type="STRING" id="59729.ENSTGUP00000028918"/>
<dbReference type="BindingDB" id="P56971"/>
<dbReference type="GlyCosmos" id="P56971">
    <property type="glycosylation" value="2 sites, No reported glycans"/>
</dbReference>
<dbReference type="Ensembl" id="ENSTGUT00000031468.1">
    <property type="protein sequence ID" value="ENSTGUP00000021444.1"/>
    <property type="gene ID" value="ENSTGUG00000020322.1"/>
</dbReference>
<dbReference type="Ensembl" id="ENSTGUT00000036566.1">
    <property type="protein sequence ID" value="ENSTGUP00000031767.1"/>
    <property type="gene ID" value="ENSTGUG00000020322.1"/>
</dbReference>
<dbReference type="Ensembl" id="ENSTGUT00000037149.1">
    <property type="protein sequence ID" value="ENSTGUP00000025330.1"/>
    <property type="gene ID" value="ENSTGUG00000020322.1"/>
</dbReference>
<dbReference type="GeneID" id="751607"/>
<dbReference type="KEGG" id="tgu:751607"/>
<dbReference type="CTD" id="1268"/>
<dbReference type="GeneTree" id="ENSGT01120000271819"/>
<dbReference type="HOGENOM" id="CLU_009579_7_0_1"/>
<dbReference type="InParanoid" id="P56971"/>
<dbReference type="OrthoDB" id="5966748at2759"/>
<dbReference type="TreeFam" id="TF330052"/>
<dbReference type="Proteomes" id="UP000007754">
    <property type="component" value="Chromosome 3"/>
</dbReference>
<dbReference type="GO" id="GO:0030424">
    <property type="term" value="C:axon"/>
    <property type="evidence" value="ECO:0007669"/>
    <property type="project" value="UniProtKB-SubCell"/>
</dbReference>
<dbReference type="GO" id="GO:0044297">
    <property type="term" value="C:cell body"/>
    <property type="evidence" value="ECO:0000314"/>
    <property type="project" value="AgBase"/>
</dbReference>
<dbReference type="GO" id="GO:0030175">
    <property type="term" value="C:filopodium"/>
    <property type="evidence" value="ECO:0000314"/>
    <property type="project" value="AgBase"/>
</dbReference>
<dbReference type="GO" id="GO:0016020">
    <property type="term" value="C:membrane"/>
    <property type="evidence" value="ECO:0000314"/>
    <property type="project" value="AgBase"/>
</dbReference>
<dbReference type="GO" id="GO:0005741">
    <property type="term" value="C:mitochondrial outer membrane"/>
    <property type="evidence" value="ECO:0007669"/>
    <property type="project" value="UniProtKB-SubCell"/>
</dbReference>
<dbReference type="GO" id="GO:0005886">
    <property type="term" value="C:plasma membrane"/>
    <property type="evidence" value="ECO:0000314"/>
    <property type="project" value="AgBase"/>
</dbReference>
<dbReference type="GO" id="GO:0098793">
    <property type="term" value="C:presynapse"/>
    <property type="evidence" value="ECO:0007669"/>
    <property type="project" value="UniProtKB-SubCell"/>
</dbReference>
<dbReference type="GO" id="GO:0004949">
    <property type="term" value="F:cannabinoid receptor activity"/>
    <property type="evidence" value="ECO:0000315"/>
    <property type="project" value="AgBase"/>
</dbReference>
<dbReference type="GO" id="GO:1904483">
    <property type="term" value="F:synthetic cannabinoid binding"/>
    <property type="evidence" value="ECO:0000314"/>
    <property type="project" value="AgBase"/>
</dbReference>
<dbReference type="GO" id="GO:0016049">
    <property type="term" value="P:cell growth"/>
    <property type="evidence" value="ECO:0000315"/>
    <property type="project" value="AgBase"/>
</dbReference>
<dbReference type="GO" id="GO:0060997">
    <property type="term" value="P:dendritic spine morphogenesis"/>
    <property type="evidence" value="ECO:0000315"/>
    <property type="project" value="AgBase"/>
</dbReference>
<dbReference type="GO" id="GO:0046847">
    <property type="term" value="P:filopodium assembly"/>
    <property type="evidence" value="ECO:0000315"/>
    <property type="project" value="AgBase"/>
</dbReference>
<dbReference type="GO" id="GO:0090394">
    <property type="term" value="P:negative regulation of excitatory postsynaptic potential"/>
    <property type="evidence" value="ECO:0000315"/>
    <property type="project" value="AgBase"/>
</dbReference>
<dbReference type="GO" id="GO:1903295">
    <property type="term" value="P:negative regulation of glutamate secretion, neurotransmission"/>
    <property type="evidence" value="ECO:0000315"/>
    <property type="project" value="AgBase"/>
</dbReference>
<dbReference type="GO" id="GO:1900454">
    <property type="term" value="P:positive regulation of long-term synaptic depression"/>
    <property type="evidence" value="ECO:0000315"/>
    <property type="project" value="AgBase"/>
</dbReference>
<dbReference type="GO" id="GO:0031915">
    <property type="term" value="P:positive regulation of synaptic plasticity"/>
    <property type="evidence" value="ECO:0000315"/>
    <property type="project" value="AgBase"/>
</dbReference>
<dbReference type="GO" id="GO:0031623">
    <property type="term" value="P:receptor internalization"/>
    <property type="evidence" value="ECO:0000315"/>
    <property type="project" value="AgBase"/>
</dbReference>
<dbReference type="CDD" id="cd15340">
    <property type="entry name" value="7tmA_CB1"/>
    <property type="match status" value="1"/>
</dbReference>
<dbReference type="FunFam" id="1.20.1070.10:FF:000072">
    <property type="entry name" value="Cannabinoid receptor 1"/>
    <property type="match status" value="1"/>
</dbReference>
<dbReference type="Gene3D" id="1.20.1070.10">
    <property type="entry name" value="Rhodopsin 7-helix transmembrane proteins"/>
    <property type="match status" value="1"/>
</dbReference>
<dbReference type="InterPro" id="IPR000810">
    <property type="entry name" value="Canbinoid_rcpt_1"/>
</dbReference>
<dbReference type="InterPro" id="IPR002230">
    <property type="entry name" value="Cnbnoid_rcpt"/>
</dbReference>
<dbReference type="InterPro" id="IPR000276">
    <property type="entry name" value="GPCR_Rhodpsn"/>
</dbReference>
<dbReference type="InterPro" id="IPR017452">
    <property type="entry name" value="GPCR_Rhodpsn_7TM"/>
</dbReference>
<dbReference type="PANTHER" id="PTHR22750">
    <property type="entry name" value="G-PROTEIN COUPLED RECEPTOR"/>
    <property type="match status" value="1"/>
</dbReference>
<dbReference type="Pfam" id="PF00001">
    <property type="entry name" value="7tm_1"/>
    <property type="match status" value="1"/>
</dbReference>
<dbReference type="PIRSF" id="PIRSF037995">
    <property type="entry name" value="Cnoid_rcpt_1"/>
    <property type="match status" value="1"/>
</dbReference>
<dbReference type="PRINTS" id="PR00522">
    <property type="entry name" value="CANABINOID1R"/>
</dbReference>
<dbReference type="PRINTS" id="PR00362">
    <property type="entry name" value="CANNABINOIDR"/>
</dbReference>
<dbReference type="PRINTS" id="PR00237">
    <property type="entry name" value="GPCRRHODOPSN"/>
</dbReference>
<dbReference type="SMART" id="SM01381">
    <property type="entry name" value="7TM_GPCR_Srsx"/>
    <property type="match status" value="1"/>
</dbReference>
<dbReference type="SUPFAM" id="SSF81321">
    <property type="entry name" value="Family A G protein-coupled receptor-like"/>
    <property type="match status" value="1"/>
</dbReference>
<dbReference type="PROSITE" id="PS00237">
    <property type="entry name" value="G_PROTEIN_RECEP_F1_1"/>
    <property type="match status" value="1"/>
</dbReference>
<dbReference type="PROSITE" id="PS50262">
    <property type="entry name" value="G_PROTEIN_RECEP_F1_2"/>
    <property type="match status" value="1"/>
</dbReference>
<proteinExistence type="evidence at transcript level"/>
<accession>P56971</accession>
<organism>
    <name type="scientific">Taeniopygia guttata</name>
    <name type="common">Zebra finch</name>
    <name type="synonym">Poephila guttata</name>
    <dbReference type="NCBI Taxonomy" id="59729"/>
    <lineage>
        <taxon>Eukaryota</taxon>
        <taxon>Metazoa</taxon>
        <taxon>Chordata</taxon>
        <taxon>Craniata</taxon>
        <taxon>Vertebrata</taxon>
        <taxon>Euteleostomi</taxon>
        <taxon>Archelosauria</taxon>
        <taxon>Archosauria</taxon>
        <taxon>Dinosauria</taxon>
        <taxon>Saurischia</taxon>
        <taxon>Theropoda</taxon>
        <taxon>Coelurosauria</taxon>
        <taxon>Aves</taxon>
        <taxon>Neognathae</taxon>
        <taxon>Neoaves</taxon>
        <taxon>Telluraves</taxon>
        <taxon>Australaves</taxon>
        <taxon>Passeriformes</taxon>
        <taxon>Passeroidea</taxon>
        <taxon>Estrildidae</taxon>
        <taxon>Estrildinae</taxon>
        <taxon>Taeniopygia</taxon>
    </lineage>
</organism>
<evidence type="ECO:0000250" key="1">
    <source>
        <dbReference type="UniProtKB" id="P20272"/>
    </source>
</evidence>
<evidence type="ECO:0000250" key="2">
    <source>
        <dbReference type="UniProtKB" id="P21554"/>
    </source>
</evidence>
<evidence type="ECO:0000250" key="3">
    <source>
        <dbReference type="UniProtKB" id="P47746"/>
    </source>
</evidence>
<evidence type="ECO:0000255" key="4"/>
<evidence type="ECO:0000255" key="5">
    <source>
        <dbReference type="PROSITE-ProRule" id="PRU00521"/>
    </source>
</evidence>